<feature type="chain" id="PRO_1000055670" description="Large ribosomal subunit protein uL14">
    <location>
        <begin position="1"/>
        <end position="121"/>
    </location>
</feature>
<name>RL14_PROMA</name>
<comment type="function">
    <text evidence="1">Binds to 23S rRNA. Forms part of two intersubunit bridges in the 70S ribosome.</text>
</comment>
<comment type="subunit">
    <text evidence="1">Part of the 50S ribosomal subunit. Forms a cluster with proteins L3 and L19. In the 70S ribosome, L14 and L19 interact and together make contacts with the 16S rRNA in bridges B5 and B8.</text>
</comment>
<comment type="similarity">
    <text evidence="1">Belongs to the universal ribosomal protein uL14 family.</text>
</comment>
<gene>
    <name evidence="1" type="primary">rplN</name>
    <name evidence="1" type="synonym">rpl14</name>
    <name type="ordered locus">Pro_1702</name>
</gene>
<proteinExistence type="inferred from homology"/>
<evidence type="ECO:0000255" key="1">
    <source>
        <dbReference type="HAMAP-Rule" id="MF_01367"/>
    </source>
</evidence>
<evidence type="ECO:0000305" key="2"/>
<organism>
    <name type="scientific">Prochlorococcus marinus (strain SARG / CCMP1375 / SS120)</name>
    <dbReference type="NCBI Taxonomy" id="167539"/>
    <lineage>
        <taxon>Bacteria</taxon>
        <taxon>Bacillati</taxon>
        <taxon>Cyanobacteriota</taxon>
        <taxon>Cyanophyceae</taxon>
        <taxon>Synechococcales</taxon>
        <taxon>Prochlorococcaceae</taxon>
        <taxon>Prochlorococcus</taxon>
    </lineage>
</organism>
<accession>Q7V9X2</accession>
<dbReference type="EMBL" id="AE017126">
    <property type="protein sequence ID" value="AAQ00746.1"/>
    <property type="molecule type" value="Genomic_DNA"/>
</dbReference>
<dbReference type="RefSeq" id="NP_876093.1">
    <property type="nucleotide sequence ID" value="NC_005042.1"/>
</dbReference>
<dbReference type="RefSeq" id="WP_011125851.1">
    <property type="nucleotide sequence ID" value="NC_005042.1"/>
</dbReference>
<dbReference type="SMR" id="Q7V9X2"/>
<dbReference type="STRING" id="167539.Pro_1702"/>
<dbReference type="EnsemblBacteria" id="AAQ00746">
    <property type="protein sequence ID" value="AAQ00746"/>
    <property type="gene ID" value="Pro_1702"/>
</dbReference>
<dbReference type="KEGG" id="pma:Pro_1702"/>
<dbReference type="PATRIC" id="fig|167539.5.peg.1797"/>
<dbReference type="eggNOG" id="COG0093">
    <property type="taxonomic scope" value="Bacteria"/>
</dbReference>
<dbReference type="HOGENOM" id="CLU_095071_2_1_3"/>
<dbReference type="OrthoDB" id="9806379at2"/>
<dbReference type="Proteomes" id="UP000001420">
    <property type="component" value="Chromosome"/>
</dbReference>
<dbReference type="GO" id="GO:0022625">
    <property type="term" value="C:cytosolic large ribosomal subunit"/>
    <property type="evidence" value="ECO:0007669"/>
    <property type="project" value="TreeGrafter"/>
</dbReference>
<dbReference type="GO" id="GO:0070180">
    <property type="term" value="F:large ribosomal subunit rRNA binding"/>
    <property type="evidence" value="ECO:0007669"/>
    <property type="project" value="TreeGrafter"/>
</dbReference>
<dbReference type="GO" id="GO:0003735">
    <property type="term" value="F:structural constituent of ribosome"/>
    <property type="evidence" value="ECO:0007669"/>
    <property type="project" value="InterPro"/>
</dbReference>
<dbReference type="GO" id="GO:0006412">
    <property type="term" value="P:translation"/>
    <property type="evidence" value="ECO:0007669"/>
    <property type="project" value="UniProtKB-UniRule"/>
</dbReference>
<dbReference type="CDD" id="cd00337">
    <property type="entry name" value="Ribosomal_uL14"/>
    <property type="match status" value="1"/>
</dbReference>
<dbReference type="FunFam" id="2.40.150.20:FF:000001">
    <property type="entry name" value="50S ribosomal protein L14"/>
    <property type="match status" value="1"/>
</dbReference>
<dbReference type="Gene3D" id="2.40.150.20">
    <property type="entry name" value="Ribosomal protein L14"/>
    <property type="match status" value="1"/>
</dbReference>
<dbReference type="HAMAP" id="MF_01367">
    <property type="entry name" value="Ribosomal_uL14"/>
    <property type="match status" value="1"/>
</dbReference>
<dbReference type="InterPro" id="IPR000218">
    <property type="entry name" value="Ribosomal_uL14"/>
</dbReference>
<dbReference type="InterPro" id="IPR005745">
    <property type="entry name" value="Ribosomal_uL14_bac-type"/>
</dbReference>
<dbReference type="InterPro" id="IPR036853">
    <property type="entry name" value="Ribosomal_uL14_sf"/>
</dbReference>
<dbReference type="NCBIfam" id="TIGR01067">
    <property type="entry name" value="rplN_bact"/>
    <property type="match status" value="1"/>
</dbReference>
<dbReference type="PANTHER" id="PTHR11761">
    <property type="entry name" value="50S/60S RIBOSOMAL PROTEIN L14/L23"/>
    <property type="match status" value="1"/>
</dbReference>
<dbReference type="PANTHER" id="PTHR11761:SF3">
    <property type="entry name" value="LARGE RIBOSOMAL SUBUNIT PROTEIN UL14M"/>
    <property type="match status" value="1"/>
</dbReference>
<dbReference type="Pfam" id="PF00238">
    <property type="entry name" value="Ribosomal_L14"/>
    <property type="match status" value="1"/>
</dbReference>
<dbReference type="SMART" id="SM01374">
    <property type="entry name" value="Ribosomal_L14"/>
    <property type="match status" value="1"/>
</dbReference>
<dbReference type="SUPFAM" id="SSF50193">
    <property type="entry name" value="Ribosomal protein L14"/>
    <property type="match status" value="1"/>
</dbReference>
<sequence length="121" mass="13390">MIQQETYLTVADNSGAKRLQCIRVLGSNRRYAHVGDVIVAAVKDAVPNMGVKKSDVVKAVVVRTKATLRRETGNSIRFDDNAAVLINEDKNPRGTRVFGPVARELRERNYTKIVSLAPEVI</sequence>
<keyword id="KW-1185">Reference proteome</keyword>
<keyword id="KW-0687">Ribonucleoprotein</keyword>
<keyword id="KW-0689">Ribosomal protein</keyword>
<keyword id="KW-0694">RNA-binding</keyword>
<keyword id="KW-0699">rRNA-binding</keyword>
<protein>
    <recommendedName>
        <fullName evidence="1">Large ribosomal subunit protein uL14</fullName>
    </recommendedName>
    <alternativeName>
        <fullName evidence="2">50S ribosomal protein L14</fullName>
    </alternativeName>
</protein>
<reference key="1">
    <citation type="journal article" date="2003" name="Proc. Natl. Acad. Sci. U.S.A.">
        <title>Genome sequence of the cyanobacterium Prochlorococcus marinus SS120, a nearly minimal oxyphototrophic genome.</title>
        <authorList>
            <person name="Dufresne A."/>
            <person name="Salanoubat M."/>
            <person name="Partensky F."/>
            <person name="Artiguenave F."/>
            <person name="Axmann I.M."/>
            <person name="Barbe V."/>
            <person name="Duprat S."/>
            <person name="Galperin M.Y."/>
            <person name="Koonin E.V."/>
            <person name="Le Gall F."/>
            <person name="Makarova K.S."/>
            <person name="Ostrowski M."/>
            <person name="Oztas S."/>
            <person name="Robert C."/>
            <person name="Rogozin I.B."/>
            <person name="Scanlan D.J."/>
            <person name="Tandeau de Marsac N."/>
            <person name="Weissenbach J."/>
            <person name="Wincker P."/>
            <person name="Wolf Y.I."/>
            <person name="Hess W.R."/>
        </authorList>
    </citation>
    <scope>NUCLEOTIDE SEQUENCE [LARGE SCALE GENOMIC DNA]</scope>
    <source>
        <strain>SARG / CCMP1375 / SS120</strain>
    </source>
</reference>